<gene>
    <name evidence="1" type="primary">pyrB</name>
    <name type="ordered locus">BCI_0258</name>
</gene>
<reference key="1">
    <citation type="journal article" date="2006" name="PLoS Biol.">
        <title>Metabolic complementarity and genomics of the dual bacterial symbiosis of sharpshooters.</title>
        <authorList>
            <person name="Wu D."/>
            <person name="Daugherty S.C."/>
            <person name="Van Aken S.E."/>
            <person name="Pai G.H."/>
            <person name="Watkins K.L."/>
            <person name="Khouri H."/>
            <person name="Tallon L.J."/>
            <person name="Zaborsky J.M."/>
            <person name="Dunbar H.E."/>
            <person name="Tran P.L."/>
            <person name="Moran N.A."/>
            <person name="Eisen J.A."/>
        </authorList>
    </citation>
    <scope>NUCLEOTIDE SEQUENCE [LARGE SCALE GENOMIC DNA]</scope>
</reference>
<keyword id="KW-0665">Pyrimidine biosynthesis</keyword>
<keyword id="KW-1185">Reference proteome</keyword>
<keyword id="KW-0808">Transferase</keyword>
<feature type="chain" id="PRO_0000321074" description="Aspartate carbamoyltransferase catalytic subunit">
    <location>
        <begin position="1"/>
        <end position="311"/>
    </location>
</feature>
<feature type="binding site" evidence="1">
    <location>
        <position position="55"/>
    </location>
    <ligand>
        <name>carbamoyl phosphate</name>
        <dbReference type="ChEBI" id="CHEBI:58228"/>
    </ligand>
</feature>
<feature type="binding site" evidence="1">
    <location>
        <position position="56"/>
    </location>
    <ligand>
        <name>carbamoyl phosphate</name>
        <dbReference type="ChEBI" id="CHEBI:58228"/>
    </ligand>
</feature>
<feature type="binding site" evidence="1">
    <location>
        <position position="85"/>
    </location>
    <ligand>
        <name>L-aspartate</name>
        <dbReference type="ChEBI" id="CHEBI:29991"/>
    </ligand>
</feature>
<feature type="binding site" evidence="1">
    <location>
        <position position="106"/>
    </location>
    <ligand>
        <name>carbamoyl phosphate</name>
        <dbReference type="ChEBI" id="CHEBI:58228"/>
    </ligand>
</feature>
<feature type="binding site" evidence="1">
    <location>
        <position position="135"/>
    </location>
    <ligand>
        <name>carbamoyl phosphate</name>
        <dbReference type="ChEBI" id="CHEBI:58228"/>
    </ligand>
</feature>
<feature type="binding site" evidence="1">
    <location>
        <position position="138"/>
    </location>
    <ligand>
        <name>carbamoyl phosphate</name>
        <dbReference type="ChEBI" id="CHEBI:58228"/>
    </ligand>
</feature>
<feature type="binding site" evidence="1">
    <location>
        <position position="168"/>
    </location>
    <ligand>
        <name>L-aspartate</name>
        <dbReference type="ChEBI" id="CHEBI:29991"/>
    </ligand>
</feature>
<feature type="binding site" evidence="1">
    <location>
        <position position="230"/>
    </location>
    <ligand>
        <name>L-aspartate</name>
        <dbReference type="ChEBI" id="CHEBI:29991"/>
    </ligand>
</feature>
<feature type="binding site" evidence="1">
    <location>
        <position position="268"/>
    </location>
    <ligand>
        <name>carbamoyl phosphate</name>
        <dbReference type="ChEBI" id="CHEBI:58228"/>
    </ligand>
</feature>
<feature type="binding site" evidence="1">
    <location>
        <position position="269"/>
    </location>
    <ligand>
        <name>carbamoyl phosphate</name>
        <dbReference type="ChEBI" id="CHEBI:58228"/>
    </ligand>
</feature>
<protein>
    <recommendedName>
        <fullName evidence="1">Aspartate carbamoyltransferase catalytic subunit</fullName>
        <ecNumber evidence="1">2.1.3.2</ecNumber>
    </recommendedName>
    <alternativeName>
        <fullName evidence="1">Aspartate transcarbamylase</fullName>
        <shortName evidence="1">ATCase</shortName>
    </alternativeName>
</protein>
<accession>Q1LTK6</accession>
<organism>
    <name type="scientific">Baumannia cicadellinicola subsp. Homalodisca coagulata</name>
    <dbReference type="NCBI Taxonomy" id="374463"/>
    <lineage>
        <taxon>Bacteria</taxon>
        <taxon>Pseudomonadati</taxon>
        <taxon>Pseudomonadota</taxon>
        <taxon>Gammaproteobacteria</taxon>
        <taxon>Candidatus Palibaumannia</taxon>
    </lineage>
</organism>
<sequence>MINPLYRKHIISINDMSSNELELVLNIAAHLKFKPQPELLKNKVIASCFFEASTRTRLSFETAIHRLGASVVGFSDAHSTSLSKKGETLADTISVISTYVDAIIIRHPHEGAARLATEFSGTVPILNAGDGANQHPTQTLLDLFNIYETQGKLNNLRIAMVGDLKYGRTVHSLTQALIKFDSNHFYFIAPDTLGMPSYILHTLIDHDIKYSMHLNLAEVIPELDILYMTRVQKERLDPTEYINVKAQFVLQIHHLLHARANMRILHPLPRVDEIAYEVDQTPYAYYFQQAGNGVFTRQALLALVLNKYLTE</sequence>
<evidence type="ECO:0000255" key="1">
    <source>
        <dbReference type="HAMAP-Rule" id="MF_00001"/>
    </source>
</evidence>
<evidence type="ECO:0000305" key="2"/>
<proteinExistence type="inferred from homology"/>
<name>PYRB_BAUCH</name>
<comment type="function">
    <text evidence="1">Catalyzes the condensation of carbamoyl phosphate and aspartate to form carbamoyl aspartate and inorganic phosphate, the committed step in the de novo pyrimidine nucleotide biosynthesis pathway.</text>
</comment>
<comment type="catalytic activity">
    <reaction evidence="1">
        <text>carbamoyl phosphate + L-aspartate = N-carbamoyl-L-aspartate + phosphate + H(+)</text>
        <dbReference type="Rhea" id="RHEA:20013"/>
        <dbReference type="ChEBI" id="CHEBI:15378"/>
        <dbReference type="ChEBI" id="CHEBI:29991"/>
        <dbReference type="ChEBI" id="CHEBI:32814"/>
        <dbReference type="ChEBI" id="CHEBI:43474"/>
        <dbReference type="ChEBI" id="CHEBI:58228"/>
        <dbReference type="EC" id="2.1.3.2"/>
    </reaction>
</comment>
<comment type="pathway">
    <text evidence="1">Pyrimidine metabolism; UMP biosynthesis via de novo pathway; (S)-dihydroorotate from bicarbonate: step 2/3.</text>
</comment>
<comment type="subunit">
    <text evidence="1">Heterododecamer (2C3:3R2) of six catalytic PyrB chains organized as two trimers (C3), and six regulatory PyrI chains organized as three dimers (R2).</text>
</comment>
<comment type="similarity">
    <text evidence="1">Belongs to the aspartate/ornithine carbamoyltransferase superfamily. ATCase family.</text>
</comment>
<comment type="sequence caution" evidence="2">
    <conflict type="erroneous initiation">
        <sequence resource="EMBL-CDS" id="ABF14189"/>
    </conflict>
</comment>
<dbReference type="EC" id="2.1.3.2" evidence="1"/>
<dbReference type="EMBL" id="CP000238">
    <property type="protein sequence ID" value="ABF14189.1"/>
    <property type="status" value="ALT_INIT"/>
    <property type="molecule type" value="Genomic_DNA"/>
</dbReference>
<dbReference type="RefSeq" id="WP_041574888.1">
    <property type="nucleotide sequence ID" value="NC_007984.1"/>
</dbReference>
<dbReference type="SMR" id="Q1LTK6"/>
<dbReference type="STRING" id="374463.BCI_0258"/>
<dbReference type="KEGG" id="bci:BCI_0258"/>
<dbReference type="HOGENOM" id="CLU_043846_1_2_6"/>
<dbReference type="OrthoDB" id="9774690at2"/>
<dbReference type="UniPathway" id="UPA00070">
    <property type="reaction ID" value="UER00116"/>
</dbReference>
<dbReference type="Proteomes" id="UP000002427">
    <property type="component" value="Chromosome"/>
</dbReference>
<dbReference type="GO" id="GO:0005829">
    <property type="term" value="C:cytosol"/>
    <property type="evidence" value="ECO:0007669"/>
    <property type="project" value="TreeGrafter"/>
</dbReference>
<dbReference type="GO" id="GO:0016597">
    <property type="term" value="F:amino acid binding"/>
    <property type="evidence" value="ECO:0007669"/>
    <property type="project" value="InterPro"/>
</dbReference>
<dbReference type="GO" id="GO:0004070">
    <property type="term" value="F:aspartate carbamoyltransferase activity"/>
    <property type="evidence" value="ECO:0007669"/>
    <property type="project" value="UniProtKB-UniRule"/>
</dbReference>
<dbReference type="GO" id="GO:0006207">
    <property type="term" value="P:'de novo' pyrimidine nucleobase biosynthetic process"/>
    <property type="evidence" value="ECO:0007669"/>
    <property type="project" value="InterPro"/>
</dbReference>
<dbReference type="GO" id="GO:0044205">
    <property type="term" value="P:'de novo' UMP biosynthetic process"/>
    <property type="evidence" value="ECO:0007669"/>
    <property type="project" value="UniProtKB-UniRule"/>
</dbReference>
<dbReference type="GO" id="GO:0006520">
    <property type="term" value="P:amino acid metabolic process"/>
    <property type="evidence" value="ECO:0007669"/>
    <property type="project" value="InterPro"/>
</dbReference>
<dbReference type="FunFam" id="3.40.50.1370:FF:000001">
    <property type="entry name" value="Aspartate carbamoyltransferase"/>
    <property type="match status" value="1"/>
</dbReference>
<dbReference type="FunFam" id="3.40.50.1370:FF:000002">
    <property type="entry name" value="Aspartate carbamoyltransferase 2"/>
    <property type="match status" value="1"/>
</dbReference>
<dbReference type="Gene3D" id="3.40.50.1370">
    <property type="entry name" value="Aspartate/ornithine carbamoyltransferase"/>
    <property type="match status" value="2"/>
</dbReference>
<dbReference type="HAMAP" id="MF_00001">
    <property type="entry name" value="Asp_carb_tr"/>
    <property type="match status" value="1"/>
</dbReference>
<dbReference type="InterPro" id="IPR006132">
    <property type="entry name" value="Asp/Orn_carbamoyltranf_P-bd"/>
</dbReference>
<dbReference type="InterPro" id="IPR006130">
    <property type="entry name" value="Asp/Orn_carbamoylTrfase"/>
</dbReference>
<dbReference type="InterPro" id="IPR036901">
    <property type="entry name" value="Asp/Orn_carbamoylTrfase_sf"/>
</dbReference>
<dbReference type="InterPro" id="IPR002082">
    <property type="entry name" value="Asp_carbamoyltransf"/>
</dbReference>
<dbReference type="InterPro" id="IPR006131">
    <property type="entry name" value="Asp_carbamoyltransf_Asp/Orn-bd"/>
</dbReference>
<dbReference type="NCBIfam" id="TIGR00670">
    <property type="entry name" value="asp_carb_tr"/>
    <property type="match status" value="1"/>
</dbReference>
<dbReference type="NCBIfam" id="NF002032">
    <property type="entry name" value="PRK00856.1"/>
    <property type="match status" value="1"/>
</dbReference>
<dbReference type="PANTHER" id="PTHR45753:SF6">
    <property type="entry name" value="ASPARTATE CARBAMOYLTRANSFERASE"/>
    <property type="match status" value="1"/>
</dbReference>
<dbReference type="PANTHER" id="PTHR45753">
    <property type="entry name" value="ORNITHINE CARBAMOYLTRANSFERASE, MITOCHONDRIAL"/>
    <property type="match status" value="1"/>
</dbReference>
<dbReference type="Pfam" id="PF00185">
    <property type="entry name" value="OTCace"/>
    <property type="match status" value="1"/>
</dbReference>
<dbReference type="Pfam" id="PF02729">
    <property type="entry name" value="OTCace_N"/>
    <property type="match status" value="1"/>
</dbReference>
<dbReference type="PRINTS" id="PR00100">
    <property type="entry name" value="AOTCASE"/>
</dbReference>
<dbReference type="PRINTS" id="PR00101">
    <property type="entry name" value="ATCASE"/>
</dbReference>
<dbReference type="SUPFAM" id="SSF53671">
    <property type="entry name" value="Aspartate/ornithine carbamoyltransferase"/>
    <property type="match status" value="1"/>
</dbReference>
<dbReference type="PROSITE" id="PS00097">
    <property type="entry name" value="CARBAMOYLTRANSFERASE"/>
    <property type="match status" value="1"/>
</dbReference>